<dbReference type="SMR" id="Q9PSM8"/>
<dbReference type="GO" id="GO:0005576">
    <property type="term" value="C:extracellular region"/>
    <property type="evidence" value="ECO:0007669"/>
    <property type="project" value="UniProtKB-SubCell"/>
</dbReference>
<dbReference type="GO" id="GO:0046872">
    <property type="term" value="F:metal ion binding"/>
    <property type="evidence" value="ECO:0007669"/>
    <property type="project" value="UniProtKB-KW"/>
</dbReference>
<dbReference type="GO" id="GO:0090729">
    <property type="term" value="F:toxin activity"/>
    <property type="evidence" value="ECO:0007669"/>
    <property type="project" value="UniProtKB-KW"/>
</dbReference>
<dbReference type="FunFam" id="3.10.100.10:FF:000087">
    <property type="entry name" value="Snaclec rhodocetin subunit delta"/>
    <property type="match status" value="1"/>
</dbReference>
<dbReference type="Gene3D" id="3.10.100.10">
    <property type="entry name" value="Mannose-Binding Protein A, subunit A"/>
    <property type="match status" value="1"/>
</dbReference>
<dbReference type="InterPro" id="IPR001304">
    <property type="entry name" value="C-type_lectin-like"/>
</dbReference>
<dbReference type="InterPro" id="IPR016186">
    <property type="entry name" value="C-type_lectin-like/link_sf"/>
</dbReference>
<dbReference type="InterPro" id="IPR050111">
    <property type="entry name" value="C-type_lectin/snaclec_domain"/>
</dbReference>
<dbReference type="InterPro" id="IPR018378">
    <property type="entry name" value="C-type_lectin_CS"/>
</dbReference>
<dbReference type="InterPro" id="IPR016187">
    <property type="entry name" value="CTDL_fold"/>
</dbReference>
<dbReference type="PANTHER" id="PTHR22803">
    <property type="entry name" value="MANNOSE, PHOSPHOLIPASE, LECTIN RECEPTOR RELATED"/>
    <property type="match status" value="1"/>
</dbReference>
<dbReference type="Pfam" id="PF00059">
    <property type="entry name" value="Lectin_C"/>
    <property type="match status" value="1"/>
</dbReference>
<dbReference type="SMART" id="SM00034">
    <property type="entry name" value="CLECT"/>
    <property type="match status" value="1"/>
</dbReference>
<dbReference type="SUPFAM" id="SSF56436">
    <property type="entry name" value="C-type lectin-like"/>
    <property type="match status" value="1"/>
</dbReference>
<dbReference type="PROSITE" id="PS00615">
    <property type="entry name" value="C_TYPE_LECTIN_1"/>
    <property type="match status" value="1"/>
</dbReference>
<dbReference type="PROSITE" id="PS50041">
    <property type="entry name" value="C_TYPE_LECTIN_2"/>
    <property type="match status" value="1"/>
</dbReference>
<organism>
    <name type="scientific">Echis carinatus</name>
    <name type="common">Saw-scaled viper</name>
    <dbReference type="NCBI Taxonomy" id="40353"/>
    <lineage>
        <taxon>Eukaryota</taxon>
        <taxon>Metazoa</taxon>
        <taxon>Chordata</taxon>
        <taxon>Craniata</taxon>
        <taxon>Vertebrata</taxon>
        <taxon>Euteleostomi</taxon>
        <taxon>Lepidosauria</taxon>
        <taxon>Squamata</taxon>
        <taxon>Bifurcata</taxon>
        <taxon>Unidentata</taxon>
        <taxon>Episquamata</taxon>
        <taxon>Toxicofera</taxon>
        <taxon>Serpentes</taxon>
        <taxon>Colubroidea</taxon>
        <taxon>Viperidae</taxon>
        <taxon>Viperinae</taxon>
        <taxon>Echis</taxon>
    </lineage>
</organism>
<feature type="chain" id="PRO_0000415606" description="Snaclec coagulation factor IX/factor X-binding protein subunit B">
    <location>
        <begin position="1"/>
        <end position="125"/>
    </location>
</feature>
<feature type="domain" description="C-type lectin" evidence="2">
    <location>
        <begin position="1"/>
        <end position="122"/>
    </location>
</feature>
<feature type="binding site" evidence="1">
    <location>
        <position position="41"/>
    </location>
    <ligand>
        <name>Ca(2+)</name>
        <dbReference type="ChEBI" id="CHEBI:29108"/>
    </ligand>
</feature>
<feature type="binding site" evidence="1">
    <location>
        <position position="47"/>
    </location>
    <ligand>
        <name>Ca(2+)</name>
        <dbReference type="ChEBI" id="CHEBI:29108"/>
    </ligand>
</feature>
<feature type="disulfide bond" evidence="2 3">
    <location>
        <begin position="2"/>
        <end position="13"/>
    </location>
</feature>
<feature type="disulfide bond" evidence="2 3">
    <location>
        <begin position="30"/>
        <end position="120"/>
    </location>
</feature>
<feature type="disulfide bond" description="Interchain (with C-81 in subunit A)" evidence="2 3">
    <location>
        <position position="75"/>
    </location>
</feature>
<feature type="disulfide bond" evidence="2 3">
    <location>
        <begin position="97"/>
        <end position="112"/>
    </location>
</feature>
<name>SL9B_ECHCA</name>
<keyword id="KW-1203">Blood coagulation cascade inhibiting toxin</keyword>
<keyword id="KW-0106">Calcium</keyword>
<keyword id="KW-0903">Direct protein sequencing</keyword>
<keyword id="KW-1015">Disulfide bond</keyword>
<keyword id="KW-1199">Hemostasis impairing toxin</keyword>
<keyword id="KW-0479">Metal-binding</keyword>
<keyword id="KW-0964">Secreted</keyword>
<keyword id="KW-0800">Toxin</keyword>
<sequence>DCSSGWTAYGKHCYKVFDEPKTWEDAEKFCSEQANGGHLVSFRSSKEADFVVTLTAQTKESEIVWMGLSKIWNQCDWGWTNGAKLNYEAWAEAESYCVWFSSTNKEWKSRPCSLFGHFVCKSPAW</sequence>
<reference key="1">
    <citation type="journal article" date="1996" name="Biochemistry">
        <title>Functional and sequence characterization of coagulation factor IX/factor X-binding protein from the venom of Echis carinatus leucogaster.</title>
        <authorList>
            <person name="Chen Y.L."/>
            <person name="Tsai I.H."/>
        </authorList>
    </citation>
    <scope>PROTEIN SEQUENCE</scope>
    <scope>FUNCTION</scope>
    <scope>DISULFIDE BONDS</scope>
    <scope>SUBUNIT</scope>
    <scope>SUBCELLULAR LOCATION</scope>
    <scope>TISSUE SPECIFICITY</scope>
    <source>
        <tissue>Venom</tissue>
    </source>
</reference>
<comment type="function">
    <text evidence="3">Anticoagulant protein which binds to coagulation factor IX (F9) and coagulation factor X (F10) in the presence of calcium. It may bind the gamma-carboxyglutamic acid-domain regions of factors with a 1 to 1 stoichiometry. The dissociation constant (K(d)) are 6.6 nM for factor IX (F9) and 125 nM for factor X (F10). Does not bind carbohydrates.</text>
</comment>
<comment type="subunit">
    <text evidence="3">Heterodimer of subunits A and B; disulfide-linked.</text>
</comment>
<comment type="subcellular location">
    <subcellularLocation>
        <location evidence="3">Secreted</location>
    </subcellularLocation>
</comment>
<comment type="tissue specificity">
    <text evidence="3">Expressed by the venom gland.</text>
</comment>
<comment type="similarity">
    <text evidence="4">Belongs to the snaclec family.</text>
</comment>
<evidence type="ECO:0000250" key="1"/>
<evidence type="ECO:0000255" key="2">
    <source>
        <dbReference type="PROSITE-ProRule" id="PRU00040"/>
    </source>
</evidence>
<evidence type="ECO:0000269" key="3">
    <source>
    </source>
</evidence>
<evidence type="ECO:0000305" key="4"/>
<protein>
    <recommendedName>
        <fullName>Snaclec coagulation factor IX/factor X-binding protein subunit B</fullName>
        <shortName>IX/X-BP subunit B</shortName>
    </recommendedName>
    <alternativeName>
        <fullName>ECLV IX/X-BP subunit B</fullName>
    </alternativeName>
</protein>
<accession>Q9PSM8</accession>
<proteinExistence type="evidence at protein level"/>